<keyword id="KW-0408">Iron</keyword>
<evidence type="ECO:0000255" key="1">
    <source>
        <dbReference type="HAMAP-Rule" id="MF_00686"/>
    </source>
</evidence>
<feature type="chain" id="PRO_1000061997" description="Probable Fe(2+)-trafficking protein">
    <location>
        <begin position="1"/>
        <end position="90"/>
    </location>
</feature>
<name>FETP_SERP5</name>
<organism>
    <name type="scientific">Serratia proteamaculans (strain 568)</name>
    <dbReference type="NCBI Taxonomy" id="399741"/>
    <lineage>
        <taxon>Bacteria</taxon>
        <taxon>Pseudomonadati</taxon>
        <taxon>Pseudomonadota</taxon>
        <taxon>Gammaproteobacteria</taxon>
        <taxon>Enterobacterales</taxon>
        <taxon>Yersiniaceae</taxon>
        <taxon>Serratia</taxon>
    </lineage>
</organism>
<gene>
    <name type="ordered locus">Spro_4044</name>
</gene>
<comment type="function">
    <text evidence="1">Could be a mediator in iron transactions between iron acquisition and iron-requiring processes, such as synthesis and/or repair of Fe-S clusters in biosynthetic enzymes.</text>
</comment>
<comment type="subunit">
    <text evidence="1">Monomer.</text>
</comment>
<comment type="similarity">
    <text evidence="1">Belongs to the Fe(2+)-trafficking protein family.</text>
</comment>
<sequence length="90" mass="10676">MSRTIFCTFLQRDAEGQDFQLYPGEVGKRIYNEISKEAWAEWMKKQTMLINEKKLNMMNVDDRKLLEGEMIKFLFEGHDVHIEGYTPPSE</sequence>
<protein>
    <recommendedName>
        <fullName evidence="1">Probable Fe(2+)-trafficking protein</fullName>
    </recommendedName>
</protein>
<proteinExistence type="inferred from homology"/>
<accession>A8GJ49</accession>
<dbReference type="EMBL" id="CP000826">
    <property type="protein sequence ID" value="ABV43139.1"/>
    <property type="molecule type" value="Genomic_DNA"/>
</dbReference>
<dbReference type="SMR" id="A8GJ49"/>
<dbReference type="STRING" id="399741.Spro_4044"/>
<dbReference type="KEGG" id="spe:Spro_4044"/>
<dbReference type="eggNOG" id="COG2924">
    <property type="taxonomic scope" value="Bacteria"/>
</dbReference>
<dbReference type="HOGENOM" id="CLU_170994_0_0_6"/>
<dbReference type="OrthoDB" id="9804318at2"/>
<dbReference type="GO" id="GO:0005829">
    <property type="term" value="C:cytosol"/>
    <property type="evidence" value="ECO:0007669"/>
    <property type="project" value="TreeGrafter"/>
</dbReference>
<dbReference type="GO" id="GO:0005506">
    <property type="term" value="F:iron ion binding"/>
    <property type="evidence" value="ECO:0007669"/>
    <property type="project" value="UniProtKB-UniRule"/>
</dbReference>
<dbReference type="GO" id="GO:0034599">
    <property type="term" value="P:cellular response to oxidative stress"/>
    <property type="evidence" value="ECO:0007669"/>
    <property type="project" value="TreeGrafter"/>
</dbReference>
<dbReference type="FunFam" id="1.10.3880.10:FF:000001">
    <property type="entry name" value="Probable Fe(2+)-trafficking protein"/>
    <property type="match status" value="1"/>
</dbReference>
<dbReference type="Gene3D" id="1.10.3880.10">
    <property type="entry name" value="Fe(II) trafficking protein YggX"/>
    <property type="match status" value="1"/>
</dbReference>
<dbReference type="HAMAP" id="MF_00686">
    <property type="entry name" value="Fe_traffic_YggX"/>
    <property type="match status" value="1"/>
</dbReference>
<dbReference type="InterPro" id="IPR007457">
    <property type="entry name" value="Fe_traffick_prot_YggX"/>
</dbReference>
<dbReference type="InterPro" id="IPR036766">
    <property type="entry name" value="Fe_traffick_prot_YggX_sf"/>
</dbReference>
<dbReference type="NCBIfam" id="NF003817">
    <property type="entry name" value="PRK05408.1"/>
    <property type="match status" value="1"/>
</dbReference>
<dbReference type="PANTHER" id="PTHR36965">
    <property type="entry name" value="FE(2+)-TRAFFICKING PROTEIN-RELATED"/>
    <property type="match status" value="1"/>
</dbReference>
<dbReference type="PANTHER" id="PTHR36965:SF1">
    <property type="entry name" value="FE(2+)-TRAFFICKING PROTEIN-RELATED"/>
    <property type="match status" value="1"/>
</dbReference>
<dbReference type="Pfam" id="PF04362">
    <property type="entry name" value="Iron_traffic"/>
    <property type="match status" value="1"/>
</dbReference>
<dbReference type="PIRSF" id="PIRSF029827">
    <property type="entry name" value="Fe_traffic_YggX"/>
    <property type="match status" value="1"/>
</dbReference>
<dbReference type="SUPFAM" id="SSF111148">
    <property type="entry name" value="YggX-like"/>
    <property type="match status" value="1"/>
</dbReference>
<reference key="1">
    <citation type="submission" date="2007-09" db="EMBL/GenBank/DDBJ databases">
        <title>Complete sequence of chromosome of Serratia proteamaculans 568.</title>
        <authorList>
            <consortium name="US DOE Joint Genome Institute"/>
            <person name="Copeland A."/>
            <person name="Lucas S."/>
            <person name="Lapidus A."/>
            <person name="Barry K."/>
            <person name="Glavina del Rio T."/>
            <person name="Dalin E."/>
            <person name="Tice H."/>
            <person name="Pitluck S."/>
            <person name="Chain P."/>
            <person name="Malfatti S."/>
            <person name="Shin M."/>
            <person name="Vergez L."/>
            <person name="Schmutz J."/>
            <person name="Larimer F."/>
            <person name="Land M."/>
            <person name="Hauser L."/>
            <person name="Kyrpides N."/>
            <person name="Kim E."/>
            <person name="Taghavi S."/>
            <person name="Newman L."/>
            <person name="Vangronsveld J."/>
            <person name="van der Lelie D."/>
            <person name="Richardson P."/>
        </authorList>
    </citation>
    <scope>NUCLEOTIDE SEQUENCE [LARGE SCALE GENOMIC DNA]</scope>
    <source>
        <strain>568</strain>
    </source>
</reference>